<comment type="function">
    <text evidence="1">Catalyzes the conversion of glucosamine-6-phosphate to glucosamine-1-phosphate.</text>
</comment>
<comment type="catalytic activity">
    <reaction evidence="1">
        <text>alpha-D-glucosamine 1-phosphate = D-glucosamine 6-phosphate</text>
        <dbReference type="Rhea" id="RHEA:23424"/>
        <dbReference type="ChEBI" id="CHEBI:58516"/>
        <dbReference type="ChEBI" id="CHEBI:58725"/>
        <dbReference type="EC" id="5.4.2.10"/>
    </reaction>
</comment>
<comment type="cofactor">
    <cofactor evidence="1">
        <name>Mg(2+)</name>
        <dbReference type="ChEBI" id="CHEBI:18420"/>
    </cofactor>
    <text evidence="1">Binds 1 Mg(2+) ion per subunit.</text>
</comment>
<comment type="PTM">
    <text evidence="1">Activated by phosphorylation.</text>
</comment>
<comment type="similarity">
    <text evidence="1">Belongs to the phosphohexose mutase family.</text>
</comment>
<sequence>MVRLFGTDGVRGVANIDLTAEQALSLASAAVEVLAGPNRTSGPSGRGKPVVVVGRDTRPSGEFLEAAVVAGLAASGADVARIGVAPTPAVAHAVAASGAMFGVMLSASHNPMPDNGIKLFAAGGLKLPDEVEDAIERRMALPPSRRPVGADVGRVRDEPVLLDRYAAHLLATLPVPLDGLRVVVDCAQGAASTLAPRVLRAAGADVVALHADGDGIAINDGSGATHLDSLRAAVVAHGADVGIAHDGDADRCLAVDATGEVVDGDQILAMCALALAERGELVDDTVVVTVMSNLGFHHAMREAGITVVTTPVGDRYVLETMRAGGYVLGGEQSGHVVFLDHATTGDGLLTALRILGRVAETGQPLGELTKAMTRLPQVLVNVRGVDRTQVDTNEELLRAVALAKAELGDEGRVLLRSSGTEPLVRVMVEAGTDAAARAVAQRLAAVVRTALPPAR</sequence>
<reference key="1">
    <citation type="journal article" date="2007" name="Genome Res.">
        <title>Genome characteristics of facultatively symbiotic Frankia sp. strains reflect host range and host plant biogeography.</title>
        <authorList>
            <person name="Normand P."/>
            <person name="Lapierre P."/>
            <person name="Tisa L.S."/>
            <person name="Gogarten J.P."/>
            <person name="Alloisio N."/>
            <person name="Bagnarol E."/>
            <person name="Bassi C.A."/>
            <person name="Berry A.M."/>
            <person name="Bickhart D.M."/>
            <person name="Choisne N."/>
            <person name="Couloux A."/>
            <person name="Cournoyer B."/>
            <person name="Cruveiller S."/>
            <person name="Daubin V."/>
            <person name="Demange N."/>
            <person name="Francino M.P."/>
            <person name="Goltsman E."/>
            <person name="Huang Y."/>
            <person name="Kopp O.R."/>
            <person name="Labarre L."/>
            <person name="Lapidus A."/>
            <person name="Lavire C."/>
            <person name="Marechal J."/>
            <person name="Martinez M."/>
            <person name="Mastronunzio J.E."/>
            <person name="Mullin B.C."/>
            <person name="Niemann J."/>
            <person name="Pujic P."/>
            <person name="Rawnsley T."/>
            <person name="Rouy Z."/>
            <person name="Schenowitz C."/>
            <person name="Sellstedt A."/>
            <person name="Tavares F."/>
            <person name="Tomkins J.P."/>
            <person name="Vallenet D."/>
            <person name="Valverde C."/>
            <person name="Wall L.G."/>
            <person name="Wang Y."/>
            <person name="Medigue C."/>
            <person name="Benson D.R."/>
        </authorList>
    </citation>
    <scope>NUCLEOTIDE SEQUENCE [LARGE SCALE GENOMIC DNA]</scope>
    <source>
        <strain>DSM 45818 / CECT 9043 / HFP020203 / CcI3</strain>
    </source>
</reference>
<keyword id="KW-0413">Isomerase</keyword>
<keyword id="KW-0460">Magnesium</keyword>
<keyword id="KW-0479">Metal-binding</keyword>
<keyword id="KW-0597">Phosphoprotein</keyword>
<keyword id="KW-1185">Reference proteome</keyword>
<proteinExistence type="inferred from homology"/>
<feature type="chain" id="PRO_0000301318" description="Phosphoglucosamine mutase">
    <location>
        <begin position="1"/>
        <end position="455"/>
    </location>
</feature>
<feature type="active site" description="Phosphoserine intermediate" evidence="1">
    <location>
        <position position="108"/>
    </location>
</feature>
<feature type="binding site" description="via phosphate group" evidence="1">
    <location>
        <position position="108"/>
    </location>
    <ligand>
        <name>Mg(2+)</name>
        <dbReference type="ChEBI" id="CHEBI:18420"/>
    </ligand>
</feature>
<feature type="binding site" evidence="1">
    <location>
        <position position="246"/>
    </location>
    <ligand>
        <name>Mg(2+)</name>
        <dbReference type="ChEBI" id="CHEBI:18420"/>
    </ligand>
</feature>
<feature type="binding site" evidence="1">
    <location>
        <position position="248"/>
    </location>
    <ligand>
        <name>Mg(2+)</name>
        <dbReference type="ChEBI" id="CHEBI:18420"/>
    </ligand>
</feature>
<feature type="binding site" evidence="1">
    <location>
        <position position="250"/>
    </location>
    <ligand>
        <name>Mg(2+)</name>
        <dbReference type="ChEBI" id="CHEBI:18420"/>
    </ligand>
</feature>
<feature type="modified residue" description="Phosphoserine" evidence="1">
    <location>
        <position position="108"/>
    </location>
</feature>
<organism>
    <name type="scientific">Frankia casuarinae (strain DSM 45818 / CECT 9043 / HFP020203 / CcI3)</name>
    <dbReference type="NCBI Taxonomy" id="106370"/>
    <lineage>
        <taxon>Bacteria</taxon>
        <taxon>Bacillati</taxon>
        <taxon>Actinomycetota</taxon>
        <taxon>Actinomycetes</taxon>
        <taxon>Frankiales</taxon>
        <taxon>Frankiaceae</taxon>
        <taxon>Frankia</taxon>
    </lineage>
</organism>
<name>GLMM_FRACC</name>
<protein>
    <recommendedName>
        <fullName evidence="1">Phosphoglucosamine mutase</fullName>
        <ecNumber evidence="1">5.4.2.10</ecNumber>
    </recommendedName>
</protein>
<gene>
    <name evidence="1" type="primary">glmM</name>
    <name type="ordered locus">Francci3_0616</name>
</gene>
<accession>Q2JFE2</accession>
<dbReference type="EC" id="5.4.2.10" evidence="1"/>
<dbReference type="EMBL" id="CP000249">
    <property type="protein sequence ID" value="ABD10000.1"/>
    <property type="molecule type" value="Genomic_DNA"/>
</dbReference>
<dbReference type="RefSeq" id="WP_011435069.1">
    <property type="nucleotide sequence ID" value="NZ_JENI01000019.1"/>
</dbReference>
<dbReference type="SMR" id="Q2JFE2"/>
<dbReference type="STRING" id="106370.Francci3_0616"/>
<dbReference type="KEGG" id="fra:Francci3_0616"/>
<dbReference type="eggNOG" id="COG1109">
    <property type="taxonomic scope" value="Bacteria"/>
</dbReference>
<dbReference type="HOGENOM" id="CLU_016950_7_0_11"/>
<dbReference type="OrthoDB" id="9803322at2"/>
<dbReference type="PhylomeDB" id="Q2JFE2"/>
<dbReference type="Proteomes" id="UP000001937">
    <property type="component" value="Chromosome"/>
</dbReference>
<dbReference type="GO" id="GO:0005829">
    <property type="term" value="C:cytosol"/>
    <property type="evidence" value="ECO:0007669"/>
    <property type="project" value="TreeGrafter"/>
</dbReference>
<dbReference type="GO" id="GO:0000287">
    <property type="term" value="F:magnesium ion binding"/>
    <property type="evidence" value="ECO:0007669"/>
    <property type="project" value="UniProtKB-UniRule"/>
</dbReference>
<dbReference type="GO" id="GO:0008966">
    <property type="term" value="F:phosphoglucosamine mutase activity"/>
    <property type="evidence" value="ECO:0007669"/>
    <property type="project" value="UniProtKB-UniRule"/>
</dbReference>
<dbReference type="GO" id="GO:0004615">
    <property type="term" value="F:phosphomannomutase activity"/>
    <property type="evidence" value="ECO:0007669"/>
    <property type="project" value="TreeGrafter"/>
</dbReference>
<dbReference type="GO" id="GO:0005975">
    <property type="term" value="P:carbohydrate metabolic process"/>
    <property type="evidence" value="ECO:0007669"/>
    <property type="project" value="InterPro"/>
</dbReference>
<dbReference type="GO" id="GO:0009252">
    <property type="term" value="P:peptidoglycan biosynthetic process"/>
    <property type="evidence" value="ECO:0007669"/>
    <property type="project" value="TreeGrafter"/>
</dbReference>
<dbReference type="GO" id="GO:0006048">
    <property type="term" value="P:UDP-N-acetylglucosamine biosynthetic process"/>
    <property type="evidence" value="ECO:0007669"/>
    <property type="project" value="TreeGrafter"/>
</dbReference>
<dbReference type="CDD" id="cd05802">
    <property type="entry name" value="GlmM"/>
    <property type="match status" value="1"/>
</dbReference>
<dbReference type="FunFam" id="3.30.310.50:FF:000001">
    <property type="entry name" value="Phosphoglucosamine mutase"/>
    <property type="match status" value="1"/>
</dbReference>
<dbReference type="FunFam" id="3.40.120.10:FF:000001">
    <property type="entry name" value="Phosphoglucosamine mutase"/>
    <property type="match status" value="1"/>
</dbReference>
<dbReference type="FunFam" id="3.40.120.10:FF:000002">
    <property type="entry name" value="Phosphoglucosamine mutase"/>
    <property type="match status" value="1"/>
</dbReference>
<dbReference type="Gene3D" id="3.40.120.10">
    <property type="entry name" value="Alpha-D-Glucose-1,6-Bisphosphate, subunit A, domain 3"/>
    <property type="match status" value="3"/>
</dbReference>
<dbReference type="Gene3D" id="3.30.310.50">
    <property type="entry name" value="Alpha-D-phosphohexomutase, C-terminal domain"/>
    <property type="match status" value="1"/>
</dbReference>
<dbReference type="HAMAP" id="MF_01554_B">
    <property type="entry name" value="GlmM_B"/>
    <property type="match status" value="1"/>
</dbReference>
<dbReference type="InterPro" id="IPR005844">
    <property type="entry name" value="A-D-PHexomutase_a/b/a-I"/>
</dbReference>
<dbReference type="InterPro" id="IPR016055">
    <property type="entry name" value="A-D-PHexomutase_a/b/a-I/II/III"/>
</dbReference>
<dbReference type="InterPro" id="IPR005845">
    <property type="entry name" value="A-D-PHexomutase_a/b/a-II"/>
</dbReference>
<dbReference type="InterPro" id="IPR005846">
    <property type="entry name" value="A-D-PHexomutase_a/b/a-III"/>
</dbReference>
<dbReference type="InterPro" id="IPR005843">
    <property type="entry name" value="A-D-PHexomutase_C"/>
</dbReference>
<dbReference type="InterPro" id="IPR036900">
    <property type="entry name" value="A-D-PHexomutase_C_sf"/>
</dbReference>
<dbReference type="InterPro" id="IPR016066">
    <property type="entry name" value="A-D-PHexomutase_CS"/>
</dbReference>
<dbReference type="InterPro" id="IPR005841">
    <property type="entry name" value="Alpha-D-phosphohexomutase_SF"/>
</dbReference>
<dbReference type="InterPro" id="IPR006352">
    <property type="entry name" value="GlmM_bact"/>
</dbReference>
<dbReference type="InterPro" id="IPR050060">
    <property type="entry name" value="Phosphoglucosamine_mutase"/>
</dbReference>
<dbReference type="NCBIfam" id="TIGR01455">
    <property type="entry name" value="glmM"/>
    <property type="match status" value="1"/>
</dbReference>
<dbReference type="PANTHER" id="PTHR42946:SF1">
    <property type="entry name" value="PHOSPHOGLUCOMUTASE (ALPHA-D-GLUCOSE-1,6-BISPHOSPHATE-DEPENDENT)"/>
    <property type="match status" value="1"/>
</dbReference>
<dbReference type="PANTHER" id="PTHR42946">
    <property type="entry name" value="PHOSPHOHEXOSE MUTASE"/>
    <property type="match status" value="1"/>
</dbReference>
<dbReference type="Pfam" id="PF02878">
    <property type="entry name" value="PGM_PMM_I"/>
    <property type="match status" value="1"/>
</dbReference>
<dbReference type="Pfam" id="PF02879">
    <property type="entry name" value="PGM_PMM_II"/>
    <property type="match status" value="1"/>
</dbReference>
<dbReference type="Pfam" id="PF02880">
    <property type="entry name" value="PGM_PMM_III"/>
    <property type="match status" value="1"/>
</dbReference>
<dbReference type="Pfam" id="PF00408">
    <property type="entry name" value="PGM_PMM_IV"/>
    <property type="match status" value="1"/>
</dbReference>
<dbReference type="PRINTS" id="PR00509">
    <property type="entry name" value="PGMPMM"/>
</dbReference>
<dbReference type="SUPFAM" id="SSF55957">
    <property type="entry name" value="Phosphoglucomutase, C-terminal domain"/>
    <property type="match status" value="1"/>
</dbReference>
<dbReference type="SUPFAM" id="SSF53738">
    <property type="entry name" value="Phosphoglucomutase, first 3 domains"/>
    <property type="match status" value="3"/>
</dbReference>
<dbReference type="PROSITE" id="PS00710">
    <property type="entry name" value="PGM_PMM"/>
    <property type="match status" value="1"/>
</dbReference>
<evidence type="ECO:0000255" key="1">
    <source>
        <dbReference type="HAMAP-Rule" id="MF_01554"/>
    </source>
</evidence>